<comment type="function">
    <text evidence="1">Catalyzes the attachment of serine to tRNA(Ser). Is also able to aminoacylate tRNA(Sec) with serine, to form the misacylated tRNA L-seryl-tRNA(Sec), which will be further converted into selenocysteinyl-tRNA(Sec).</text>
</comment>
<comment type="catalytic activity">
    <reaction evidence="1">
        <text>tRNA(Ser) + L-serine + ATP = L-seryl-tRNA(Ser) + AMP + diphosphate + H(+)</text>
        <dbReference type="Rhea" id="RHEA:12292"/>
        <dbReference type="Rhea" id="RHEA-COMP:9669"/>
        <dbReference type="Rhea" id="RHEA-COMP:9703"/>
        <dbReference type="ChEBI" id="CHEBI:15378"/>
        <dbReference type="ChEBI" id="CHEBI:30616"/>
        <dbReference type="ChEBI" id="CHEBI:33019"/>
        <dbReference type="ChEBI" id="CHEBI:33384"/>
        <dbReference type="ChEBI" id="CHEBI:78442"/>
        <dbReference type="ChEBI" id="CHEBI:78533"/>
        <dbReference type="ChEBI" id="CHEBI:456215"/>
        <dbReference type="EC" id="6.1.1.11"/>
    </reaction>
</comment>
<comment type="catalytic activity">
    <reaction evidence="1">
        <text>tRNA(Sec) + L-serine + ATP = L-seryl-tRNA(Sec) + AMP + diphosphate + H(+)</text>
        <dbReference type="Rhea" id="RHEA:42580"/>
        <dbReference type="Rhea" id="RHEA-COMP:9742"/>
        <dbReference type="Rhea" id="RHEA-COMP:10128"/>
        <dbReference type="ChEBI" id="CHEBI:15378"/>
        <dbReference type="ChEBI" id="CHEBI:30616"/>
        <dbReference type="ChEBI" id="CHEBI:33019"/>
        <dbReference type="ChEBI" id="CHEBI:33384"/>
        <dbReference type="ChEBI" id="CHEBI:78442"/>
        <dbReference type="ChEBI" id="CHEBI:78533"/>
        <dbReference type="ChEBI" id="CHEBI:456215"/>
        <dbReference type="EC" id="6.1.1.11"/>
    </reaction>
</comment>
<comment type="pathway">
    <text evidence="1">Aminoacyl-tRNA biosynthesis; selenocysteinyl-tRNA(Sec) biosynthesis; L-seryl-tRNA(Sec) from L-serine and tRNA(Sec): step 1/1.</text>
</comment>
<comment type="subunit">
    <text evidence="1">Homodimer. The tRNA molecule binds across the dimer.</text>
</comment>
<comment type="subcellular location">
    <subcellularLocation>
        <location evidence="1">Cytoplasm</location>
    </subcellularLocation>
</comment>
<comment type="domain">
    <text evidence="1">Consists of two distinct domains, a catalytic core and a N-terminal extension that is involved in tRNA binding.</text>
</comment>
<comment type="similarity">
    <text evidence="1">Belongs to the class-II aminoacyl-tRNA synthetase family. Type-1 seryl-tRNA synthetase subfamily.</text>
</comment>
<reference key="1">
    <citation type="journal article" date="2009" name="PLoS Genet.">
        <title>Organised genome dynamics in the Escherichia coli species results in highly diverse adaptive paths.</title>
        <authorList>
            <person name="Touchon M."/>
            <person name="Hoede C."/>
            <person name="Tenaillon O."/>
            <person name="Barbe V."/>
            <person name="Baeriswyl S."/>
            <person name="Bidet P."/>
            <person name="Bingen E."/>
            <person name="Bonacorsi S."/>
            <person name="Bouchier C."/>
            <person name="Bouvet O."/>
            <person name="Calteau A."/>
            <person name="Chiapello H."/>
            <person name="Clermont O."/>
            <person name="Cruveiller S."/>
            <person name="Danchin A."/>
            <person name="Diard M."/>
            <person name="Dossat C."/>
            <person name="Karoui M.E."/>
            <person name="Frapy E."/>
            <person name="Garry L."/>
            <person name="Ghigo J.M."/>
            <person name="Gilles A.M."/>
            <person name="Johnson J."/>
            <person name="Le Bouguenec C."/>
            <person name="Lescat M."/>
            <person name="Mangenot S."/>
            <person name="Martinez-Jehanne V."/>
            <person name="Matic I."/>
            <person name="Nassif X."/>
            <person name="Oztas S."/>
            <person name="Petit M.A."/>
            <person name="Pichon C."/>
            <person name="Rouy Z."/>
            <person name="Ruf C.S."/>
            <person name="Schneider D."/>
            <person name="Tourret J."/>
            <person name="Vacherie B."/>
            <person name="Vallenet D."/>
            <person name="Medigue C."/>
            <person name="Rocha E.P.C."/>
            <person name="Denamur E."/>
        </authorList>
    </citation>
    <scope>NUCLEOTIDE SEQUENCE [LARGE SCALE GENOMIC DNA]</scope>
    <source>
        <strain>ED1a</strain>
    </source>
</reference>
<keyword id="KW-0030">Aminoacyl-tRNA synthetase</keyword>
<keyword id="KW-0067">ATP-binding</keyword>
<keyword id="KW-0963">Cytoplasm</keyword>
<keyword id="KW-0436">Ligase</keyword>
<keyword id="KW-0547">Nucleotide-binding</keyword>
<keyword id="KW-0648">Protein biosynthesis</keyword>
<sequence>MLDPNLLRNEPDAVAEKLARRGFKLDVDKLGALEERRKVLQVKTENLQAERNSRSKSIGQAKARGEDIEPLRLEVNKLGEELDAAKAELDALQAEIRDIALTIPNLPADEVPVGKDENDNVEVSRWGTPREFDFEVRDHVTLGEMHSGLDFAAAVKLTGSRFVVMKGQIARMHRALSQFMLDLHTEQHGYSENYVPYLVNQDTLYGTGQLPKFAGDLFHTRPLEEEADTSNYALIPTAEVPLTNLVRGEIIDEDDLPIKMTAHTPCFRSEAGSYGRDTRGLIRMHQFDKVEMVQIVRPEDSMAALEEMTGHAEKVLQLLGLPYRKIILCTGDMGFGACKTYDLEVWIPAQNTYREISSCSNVWDFQARRMQARCRSKSDKKTRLVHTLNGSGLAVGRTLVAVMENYQQADGRIEVPEVLRPYMNGLEYIG</sequence>
<accession>B7MRV6</accession>
<dbReference type="EC" id="6.1.1.11" evidence="1"/>
<dbReference type="EMBL" id="CU928162">
    <property type="protein sequence ID" value="CAR07070.1"/>
    <property type="molecule type" value="Genomic_DNA"/>
</dbReference>
<dbReference type="RefSeq" id="WP_000886683.1">
    <property type="nucleotide sequence ID" value="NC_011745.1"/>
</dbReference>
<dbReference type="SMR" id="B7MRV6"/>
<dbReference type="GeneID" id="93776527"/>
<dbReference type="KEGG" id="ecq:ECED1_0867"/>
<dbReference type="HOGENOM" id="CLU_023797_1_1_6"/>
<dbReference type="UniPathway" id="UPA00906">
    <property type="reaction ID" value="UER00895"/>
</dbReference>
<dbReference type="Proteomes" id="UP000000748">
    <property type="component" value="Chromosome"/>
</dbReference>
<dbReference type="GO" id="GO:0005737">
    <property type="term" value="C:cytoplasm"/>
    <property type="evidence" value="ECO:0007669"/>
    <property type="project" value="UniProtKB-SubCell"/>
</dbReference>
<dbReference type="GO" id="GO:0005524">
    <property type="term" value="F:ATP binding"/>
    <property type="evidence" value="ECO:0007669"/>
    <property type="project" value="UniProtKB-UniRule"/>
</dbReference>
<dbReference type="GO" id="GO:0004828">
    <property type="term" value="F:serine-tRNA ligase activity"/>
    <property type="evidence" value="ECO:0007669"/>
    <property type="project" value="UniProtKB-UniRule"/>
</dbReference>
<dbReference type="GO" id="GO:0016260">
    <property type="term" value="P:selenocysteine biosynthetic process"/>
    <property type="evidence" value="ECO:0007669"/>
    <property type="project" value="UniProtKB-UniRule"/>
</dbReference>
<dbReference type="GO" id="GO:0006434">
    <property type="term" value="P:seryl-tRNA aminoacylation"/>
    <property type="evidence" value="ECO:0007669"/>
    <property type="project" value="UniProtKB-UniRule"/>
</dbReference>
<dbReference type="CDD" id="cd00770">
    <property type="entry name" value="SerRS_core"/>
    <property type="match status" value="1"/>
</dbReference>
<dbReference type="FunFam" id="1.10.287.40:FF:000001">
    <property type="entry name" value="Serine--tRNA ligase"/>
    <property type="match status" value="1"/>
</dbReference>
<dbReference type="FunFam" id="3.30.930.10:FF:000018">
    <property type="entry name" value="Serine--tRNA ligase"/>
    <property type="match status" value="1"/>
</dbReference>
<dbReference type="Gene3D" id="3.30.930.10">
    <property type="entry name" value="Bira Bifunctional Protein, Domain 2"/>
    <property type="match status" value="1"/>
</dbReference>
<dbReference type="Gene3D" id="1.10.287.40">
    <property type="entry name" value="Serine-tRNA synthetase, tRNA binding domain"/>
    <property type="match status" value="1"/>
</dbReference>
<dbReference type="HAMAP" id="MF_00176">
    <property type="entry name" value="Ser_tRNA_synth_type1"/>
    <property type="match status" value="1"/>
</dbReference>
<dbReference type="InterPro" id="IPR002314">
    <property type="entry name" value="aa-tRNA-synt_IIb"/>
</dbReference>
<dbReference type="InterPro" id="IPR006195">
    <property type="entry name" value="aa-tRNA-synth_II"/>
</dbReference>
<dbReference type="InterPro" id="IPR045864">
    <property type="entry name" value="aa-tRNA-synth_II/BPL/LPL"/>
</dbReference>
<dbReference type="InterPro" id="IPR002317">
    <property type="entry name" value="Ser-tRNA-ligase_type_1"/>
</dbReference>
<dbReference type="InterPro" id="IPR015866">
    <property type="entry name" value="Ser-tRNA-synth_1_N"/>
</dbReference>
<dbReference type="InterPro" id="IPR042103">
    <property type="entry name" value="SerRS_1_N_sf"/>
</dbReference>
<dbReference type="InterPro" id="IPR033729">
    <property type="entry name" value="SerRS_core"/>
</dbReference>
<dbReference type="InterPro" id="IPR010978">
    <property type="entry name" value="tRNA-bd_arm"/>
</dbReference>
<dbReference type="NCBIfam" id="TIGR00414">
    <property type="entry name" value="serS"/>
    <property type="match status" value="1"/>
</dbReference>
<dbReference type="PANTHER" id="PTHR43697:SF1">
    <property type="entry name" value="SERINE--TRNA LIGASE"/>
    <property type="match status" value="1"/>
</dbReference>
<dbReference type="PANTHER" id="PTHR43697">
    <property type="entry name" value="SERYL-TRNA SYNTHETASE"/>
    <property type="match status" value="1"/>
</dbReference>
<dbReference type="Pfam" id="PF02403">
    <property type="entry name" value="Seryl_tRNA_N"/>
    <property type="match status" value="1"/>
</dbReference>
<dbReference type="Pfam" id="PF00587">
    <property type="entry name" value="tRNA-synt_2b"/>
    <property type="match status" value="1"/>
</dbReference>
<dbReference type="PIRSF" id="PIRSF001529">
    <property type="entry name" value="Ser-tRNA-synth_IIa"/>
    <property type="match status" value="1"/>
</dbReference>
<dbReference type="PRINTS" id="PR00981">
    <property type="entry name" value="TRNASYNTHSER"/>
</dbReference>
<dbReference type="SUPFAM" id="SSF55681">
    <property type="entry name" value="Class II aaRS and biotin synthetases"/>
    <property type="match status" value="1"/>
</dbReference>
<dbReference type="SUPFAM" id="SSF46589">
    <property type="entry name" value="tRNA-binding arm"/>
    <property type="match status" value="1"/>
</dbReference>
<dbReference type="PROSITE" id="PS50862">
    <property type="entry name" value="AA_TRNA_LIGASE_II"/>
    <property type="match status" value="1"/>
</dbReference>
<gene>
    <name evidence="1" type="primary">serS</name>
    <name type="ordered locus">ECED1_0867</name>
</gene>
<feature type="chain" id="PRO_1000199483" description="Serine--tRNA ligase">
    <location>
        <begin position="1"/>
        <end position="430"/>
    </location>
</feature>
<feature type="binding site" evidence="1">
    <location>
        <begin position="237"/>
        <end position="239"/>
    </location>
    <ligand>
        <name>L-serine</name>
        <dbReference type="ChEBI" id="CHEBI:33384"/>
    </ligand>
</feature>
<feature type="binding site" evidence="1">
    <location>
        <begin position="268"/>
        <end position="270"/>
    </location>
    <ligand>
        <name>ATP</name>
        <dbReference type="ChEBI" id="CHEBI:30616"/>
    </ligand>
</feature>
<feature type="binding site" evidence="1">
    <location>
        <position position="291"/>
    </location>
    <ligand>
        <name>L-serine</name>
        <dbReference type="ChEBI" id="CHEBI:33384"/>
    </ligand>
</feature>
<feature type="binding site" evidence="1">
    <location>
        <begin position="355"/>
        <end position="358"/>
    </location>
    <ligand>
        <name>ATP</name>
        <dbReference type="ChEBI" id="CHEBI:30616"/>
    </ligand>
</feature>
<feature type="binding site" evidence="1">
    <location>
        <position position="391"/>
    </location>
    <ligand>
        <name>L-serine</name>
        <dbReference type="ChEBI" id="CHEBI:33384"/>
    </ligand>
</feature>
<evidence type="ECO:0000255" key="1">
    <source>
        <dbReference type="HAMAP-Rule" id="MF_00176"/>
    </source>
</evidence>
<organism>
    <name type="scientific">Escherichia coli O81 (strain ED1a)</name>
    <dbReference type="NCBI Taxonomy" id="585397"/>
    <lineage>
        <taxon>Bacteria</taxon>
        <taxon>Pseudomonadati</taxon>
        <taxon>Pseudomonadota</taxon>
        <taxon>Gammaproteobacteria</taxon>
        <taxon>Enterobacterales</taxon>
        <taxon>Enterobacteriaceae</taxon>
        <taxon>Escherichia</taxon>
    </lineage>
</organism>
<protein>
    <recommendedName>
        <fullName evidence="1">Serine--tRNA ligase</fullName>
        <ecNumber evidence="1">6.1.1.11</ecNumber>
    </recommendedName>
    <alternativeName>
        <fullName evidence="1">Seryl-tRNA synthetase</fullName>
        <shortName evidence="1">SerRS</shortName>
    </alternativeName>
    <alternativeName>
        <fullName evidence="1">Seryl-tRNA(Ser/Sec) synthetase</fullName>
    </alternativeName>
</protein>
<proteinExistence type="inferred from homology"/>
<name>SYS_ECO81</name>